<feature type="chain" id="PRO_0000379098" description="Uncharacterized protein YjfB">
    <location>
        <begin position="1"/>
        <end position="55"/>
    </location>
</feature>
<feature type="coiled-coil region" evidence="1">
    <location>
        <begin position="17"/>
        <end position="44"/>
    </location>
</feature>
<sequence length="55" mass="5983">MDIPALSVAMHQASLAQNVNIALTKKRLDTAQQNADQTLKMIQHPTLGQTIDVKA</sequence>
<protein>
    <recommendedName>
        <fullName>Uncharacterized protein YjfB</fullName>
    </recommendedName>
</protein>
<accession>O34438</accession>
<accession>Q796P3</accession>
<comment type="induction">
    <text evidence="2">Transcriptionally regulated by SigD.</text>
</comment>
<name>YJFB_BACSU</name>
<evidence type="ECO:0000255" key="1"/>
<evidence type="ECO:0000269" key="2">
    <source>
    </source>
</evidence>
<keyword id="KW-0175">Coiled coil</keyword>
<keyword id="KW-1185">Reference proteome</keyword>
<proteinExistence type="evidence at transcript level"/>
<dbReference type="EMBL" id="AF015825">
    <property type="protein sequence ID" value="AAC46308.1"/>
    <property type="molecule type" value="Genomic_DNA"/>
</dbReference>
<dbReference type="EMBL" id="AL009126">
    <property type="protein sequence ID" value="CAB13069.1"/>
    <property type="molecule type" value="Genomic_DNA"/>
</dbReference>
<dbReference type="PIR" id="A69850">
    <property type="entry name" value="A69850"/>
</dbReference>
<dbReference type="RefSeq" id="NP_389094.1">
    <property type="nucleotide sequence ID" value="NC_000964.3"/>
</dbReference>
<dbReference type="RefSeq" id="WP_003232812.1">
    <property type="nucleotide sequence ID" value="NZ_OZ025638.1"/>
</dbReference>
<dbReference type="SMR" id="O34438"/>
<dbReference type="FunCoup" id="O34438">
    <property type="interactions" value="151"/>
</dbReference>
<dbReference type="STRING" id="224308.BSU12120"/>
<dbReference type="PaxDb" id="224308-BSU12120"/>
<dbReference type="EnsemblBacteria" id="CAB13069">
    <property type="protein sequence ID" value="CAB13069"/>
    <property type="gene ID" value="BSU_12120"/>
</dbReference>
<dbReference type="GeneID" id="936446"/>
<dbReference type="KEGG" id="bsu:BSU12120"/>
<dbReference type="PATRIC" id="fig|224308.179.peg.1309"/>
<dbReference type="eggNOG" id="ENOG5033AGR">
    <property type="taxonomic scope" value="Bacteria"/>
</dbReference>
<dbReference type="InParanoid" id="O34438"/>
<dbReference type="OrthoDB" id="1924973at2"/>
<dbReference type="BioCyc" id="BSUB:BSU12120-MONOMER"/>
<dbReference type="Proteomes" id="UP000001570">
    <property type="component" value="Chromosome"/>
</dbReference>
<dbReference type="InterPro" id="IPR025906">
    <property type="entry name" value="YjfB_motility"/>
</dbReference>
<dbReference type="Pfam" id="PF14070">
    <property type="entry name" value="YjfB_motility"/>
    <property type="match status" value="1"/>
</dbReference>
<organism>
    <name type="scientific">Bacillus subtilis (strain 168)</name>
    <dbReference type="NCBI Taxonomy" id="224308"/>
    <lineage>
        <taxon>Bacteria</taxon>
        <taxon>Bacillati</taxon>
        <taxon>Bacillota</taxon>
        <taxon>Bacilli</taxon>
        <taxon>Bacillales</taxon>
        <taxon>Bacillaceae</taxon>
        <taxon>Bacillus</taxon>
    </lineage>
</organism>
<reference key="1">
    <citation type="journal article" date="1998" name="Microbiology">
        <title>A 35.7 kb DNA fragment from the Bacillus subtilis chromosome containing a putative 12.3 kb operon involved in hexuronate catabolism and a perfectly symmetrical hypothetical catabolite-responsive element.</title>
        <authorList>
            <person name="Rivolta C."/>
            <person name="Soldo B."/>
            <person name="Lazarevic V."/>
            <person name="Joris B."/>
            <person name="Mauel C."/>
            <person name="Karamata D."/>
        </authorList>
    </citation>
    <scope>NUCLEOTIDE SEQUENCE [GENOMIC DNA]</scope>
    <source>
        <strain>168</strain>
    </source>
</reference>
<reference key="2">
    <citation type="journal article" date="1997" name="Nature">
        <title>The complete genome sequence of the Gram-positive bacterium Bacillus subtilis.</title>
        <authorList>
            <person name="Kunst F."/>
            <person name="Ogasawara N."/>
            <person name="Moszer I."/>
            <person name="Albertini A.M."/>
            <person name="Alloni G."/>
            <person name="Azevedo V."/>
            <person name="Bertero M.G."/>
            <person name="Bessieres P."/>
            <person name="Bolotin A."/>
            <person name="Borchert S."/>
            <person name="Borriss R."/>
            <person name="Boursier L."/>
            <person name="Brans A."/>
            <person name="Braun M."/>
            <person name="Brignell S.C."/>
            <person name="Bron S."/>
            <person name="Brouillet S."/>
            <person name="Bruschi C.V."/>
            <person name="Caldwell B."/>
            <person name="Capuano V."/>
            <person name="Carter N.M."/>
            <person name="Choi S.-K."/>
            <person name="Codani J.-J."/>
            <person name="Connerton I.F."/>
            <person name="Cummings N.J."/>
            <person name="Daniel R.A."/>
            <person name="Denizot F."/>
            <person name="Devine K.M."/>
            <person name="Duesterhoeft A."/>
            <person name="Ehrlich S.D."/>
            <person name="Emmerson P.T."/>
            <person name="Entian K.-D."/>
            <person name="Errington J."/>
            <person name="Fabret C."/>
            <person name="Ferrari E."/>
            <person name="Foulger D."/>
            <person name="Fritz C."/>
            <person name="Fujita M."/>
            <person name="Fujita Y."/>
            <person name="Fuma S."/>
            <person name="Galizzi A."/>
            <person name="Galleron N."/>
            <person name="Ghim S.-Y."/>
            <person name="Glaser P."/>
            <person name="Goffeau A."/>
            <person name="Golightly E.J."/>
            <person name="Grandi G."/>
            <person name="Guiseppi G."/>
            <person name="Guy B.J."/>
            <person name="Haga K."/>
            <person name="Haiech J."/>
            <person name="Harwood C.R."/>
            <person name="Henaut A."/>
            <person name="Hilbert H."/>
            <person name="Holsappel S."/>
            <person name="Hosono S."/>
            <person name="Hullo M.-F."/>
            <person name="Itaya M."/>
            <person name="Jones L.-M."/>
            <person name="Joris B."/>
            <person name="Karamata D."/>
            <person name="Kasahara Y."/>
            <person name="Klaerr-Blanchard M."/>
            <person name="Klein C."/>
            <person name="Kobayashi Y."/>
            <person name="Koetter P."/>
            <person name="Koningstein G."/>
            <person name="Krogh S."/>
            <person name="Kumano M."/>
            <person name="Kurita K."/>
            <person name="Lapidus A."/>
            <person name="Lardinois S."/>
            <person name="Lauber J."/>
            <person name="Lazarevic V."/>
            <person name="Lee S.-M."/>
            <person name="Levine A."/>
            <person name="Liu H."/>
            <person name="Masuda S."/>
            <person name="Mauel C."/>
            <person name="Medigue C."/>
            <person name="Medina N."/>
            <person name="Mellado R.P."/>
            <person name="Mizuno M."/>
            <person name="Moestl D."/>
            <person name="Nakai S."/>
            <person name="Noback M."/>
            <person name="Noone D."/>
            <person name="O'Reilly M."/>
            <person name="Ogawa K."/>
            <person name="Ogiwara A."/>
            <person name="Oudega B."/>
            <person name="Park S.-H."/>
            <person name="Parro V."/>
            <person name="Pohl T.M."/>
            <person name="Portetelle D."/>
            <person name="Porwollik S."/>
            <person name="Prescott A.M."/>
            <person name="Presecan E."/>
            <person name="Pujic P."/>
            <person name="Purnelle B."/>
            <person name="Rapoport G."/>
            <person name="Rey M."/>
            <person name="Reynolds S."/>
            <person name="Rieger M."/>
            <person name="Rivolta C."/>
            <person name="Rocha E."/>
            <person name="Roche B."/>
            <person name="Rose M."/>
            <person name="Sadaie Y."/>
            <person name="Sato T."/>
            <person name="Scanlan E."/>
            <person name="Schleich S."/>
            <person name="Schroeter R."/>
            <person name="Scoffone F."/>
            <person name="Sekiguchi J."/>
            <person name="Sekowska A."/>
            <person name="Seror S.J."/>
            <person name="Serror P."/>
            <person name="Shin B.-S."/>
            <person name="Soldo B."/>
            <person name="Sorokin A."/>
            <person name="Tacconi E."/>
            <person name="Takagi T."/>
            <person name="Takahashi H."/>
            <person name="Takemaru K."/>
            <person name="Takeuchi M."/>
            <person name="Tamakoshi A."/>
            <person name="Tanaka T."/>
            <person name="Terpstra P."/>
            <person name="Tognoni A."/>
            <person name="Tosato V."/>
            <person name="Uchiyama S."/>
            <person name="Vandenbol M."/>
            <person name="Vannier F."/>
            <person name="Vassarotti A."/>
            <person name="Viari A."/>
            <person name="Wambutt R."/>
            <person name="Wedler E."/>
            <person name="Wedler H."/>
            <person name="Weitzenegger T."/>
            <person name="Winters P."/>
            <person name="Wipat A."/>
            <person name="Yamamoto H."/>
            <person name="Yamane K."/>
            <person name="Yasumoto K."/>
            <person name="Yata K."/>
            <person name="Yoshida K."/>
            <person name="Yoshikawa H.-F."/>
            <person name="Zumstein E."/>
            <person name="Yoshikawa H."/>
            <person name="Danchin A."/>
        </authorList>
    </citation>
    <scope>NUCLEOTIDE SEQUENCE [LARGE SCALE GENOMIC DNA]</scope>
    <source>
        <strain>168</strain>
    </source>
</reference>
<reference key="3">
    <citation type="journal article" date="2004" name="Gene">
        <title>Systematic analysis of SigD-regulated genes in Bacillus subtilis by DNA microarray and Northern blotting analyses.</title>
        <authorList>
            <person name="Serizawa M."/>
            <person name="Yamamoto H."/>
            <person name="Yamaguchi H."/>
            <person name="Fujita Y."/>
            <person name="Kobayashi K."/>
            <person name="Ogasawara N."/>
            <person name="Sekiguchi J."/>
        </authorList>
    </citation>
    <scope>INDUCTION</scope>
    <source>
        <strain>168</strain>
    </source>
</reference>
<gene>
    <name type="primary">yjfB</name>
    <name type="ordered locus">BSU12120</name>
</gene>